<name>NS1_I43A0</name>
<comment type="function">
    <text evidence="1">Inhibits post-transcriptional processing of cellular pre-mRNA, by binding and inhibiting two cellular proteins that are required for the 3'-end processing of cellular pre-mRNAs: the 30 kDa cleavage and polyadenylation specificity factor/CPSF4 and the poly(A)-binding protein 2/PABPN1. In turn, unprocessed 3' end pre-mRNAs accumulate in the host nucleus and are no longer exported to the cytoplasm. Cellular protein synthesis is thereby shut off very early after virus infection. Viral protein synthesis is not affected by the inhibition of the cellular 3' end processing machinery because the poly(A) tails of viral mRNAs are produced by the viral polymerase through a stuttering mechanism. Prevents the establishment of the cellular antiviral state by inhibiting TRIM25-mediated RIGI ubiquitination, which normally triggers the antiviral transduction signal that leads to the activation of type I IFN genes by transcription factors IRF3 and IRF7. Also binds poly(A) and U6 snRNA. Inhibits the integrated stress response (ISR) in the infected cell by blocking dsRNA binding by EIF2AK2/PKR and further phosphorylation of EIF2S1/EIF-2ALPHA. Stress granule formation is thus inhibited, which allows protein synthesis and viral replication.</text>
</comment>
<comment type="subunit">
    <text evidence="1">Homodimer. Interacts with host TRIM25 (via coiled coil); this interaction specifically inhibits TRIM25 multimerization and TRIM25-mediated RIGI CARD ubiquitination. Interacts with human EIF2AK2/PKR, CPSF4, IVNS1ABP and PABPN1.</text>
</comment>
<comment type="subcellular location">
    <subcellularLocation>
        <location evidence="1">Host nucleus</location>
    </subcellularLocation>
    <subcellularLocation>
        <location evidence="1">Host cytoplasm</location>
    </subcellularLocation>
    <text evidence="1">In uninfected, transfected cells, NS1 is localized in the nucleus. Only in virus infected cells, the nuclear export signal is unveiled, presumably by a viral protein, and a fraction of NS1 is exported in the cytoplasm.</text>
</comment>
<comment type="alternative products">
    <event type="alternative splicing"/>
    <isoform>
        <id>A4GCL4-1</id>
        <name>NS1</name>
        <sequence type="displayed"/>
    </isoform>
    <isoform>
        <id>A4GCL3-1</id>
        <name>NEP</name>
        <name>NS2</name>
        <sequence type="external"/>
    </isoform>
</comment>
<comment type="domain">
    <text evidence="1">The dsRNA-binding region is required for suppression of RNA silencing.</text>
</comment>
<comment type="PTM">
    <text evidence="1">Upon interferon induction, ISGylated via host HERC5; this results in the impairment of NS1 interaction with RNA targets due to its inability to form homodimers and to interact with host EIF2AK2/PKR.</text>
</comment>
<comment type="similarity">
    <text evidence="1">Belongs to the influenza A viruses NS1 family.</text>
</comment>
<reference key="1">
    <citation type="submission" date="2007-03" db="EMBL/GenBank/DDBJ databases">
        <title>The NIAID influenza genome sequencing project.</title>
        <authorList>
            <person name="Ghedin E."/>
            <person name="Spiro D."/>
            <person name="Miller N."/>
            <person name="Zaborsky J."/>
            <person name="Feldblyum T."/>
            <person name="Subbu V."/>
            <person name="Shumway M."/>
            <person name="Sparenborg J."/>
            <person name="Groveman L."/>
            <person name="Halpin R."/>
            <person name="Sitz J."/>
            <person name="Koo H."/>
            <person name="Salzberg S.L."/>
            <person name="Webster R.G."/>
            <person name="Hoffmann E."/>
            <person name="Krauss S."/>
            <person name="Naeve C."/>
            <person name="Bao Y."/>
            <person name="Bolotov P."/>
            <person name="Dernovoy D."/>
            <person name="Kiryutin B."/>
            <person name="Lipman D.J."/>
            <person name="Tatusova T."/>
        </authorList>
    </citation>
    <scope>NUCLEOTIDE SEQUENCE [GENOMIC RNA]</scope>
</reference>
<reference key="2">
    <citation type="submission" date="2007-03" db="EMBL/GenBank/DDBJ databases">
        <authorList>
            <consortium name="The NIAID Influenza Genome Sequencing Consortium"/>
        </authorList>
    </citation>
    <scope>NUCLEOTIDE SEQUENCE [GENOMIC RNA]</scope>
</reference>
<organism>
    <name type="scientific">Influenza A virus (strain A/USA:Iowa/1943 H1N1)</name>
    <dbReference type="NCBI Taxonomy" id="425563"/>
    <lineage>
        <taxon>Viruses</taxon>
        <taxon>Riboviria</taxon>
        <taxon>Orthornavirae</taxon>
        <taxon>Negarnaviricota</taxon>
        <taxon>Polyploviricotina</taxon>
        <taxon>Insthoviricetes</taxon>
        <taxon>Articulavirales</taxon>
        <taxon>Orthomyxoviridae</taxon>
        <taxon>Alphainfluenzavirus</taxon>
        <taxon>Alphainfluenzavirus influenzae</taxon>
        <taxon>Influenza A virus</taxon>
    </lineage>
</organism>
<organismHost>
    <name type="scientific">Aves</name>
    <dbReference type="NCBI Taxonomy" id="8782"/>
</organismHost>
<organismHost>
    <name type="scientific">Homo sapiens</name>
    <name type="common">Human</name>
    <dbReference type="NCBI Taxonomy" id="9606"/>
</organismHost>
<organismHost>
    <name type="scientific">Sus scrofa</name>
    <name type="common">Pig</name>
    <dbReference type="NCBI Taxonomy" id="9823"/>
</organismHost>
<feature type="chain" id="PRO_0000372983" description="Non-structural protein 1">
    <location>
        <begin position="1"/>
        <end position="224"/>
    </location>
</feature>
<feature type="region of interest" description="RNA-binding and homodimerization" evidence="1">
    <location>
        <begin position="1"/>
        <end position="73"/>
    </location>
</feature>
<feature type="region of interest" description="CPSF4-binding" evidence="1">
    <location>
        <begin position="174"/>
        <end position="209"/>
    </location>
</feature>
<feature type="region of interest" description="Disordered" evidence="2">
    <location>
        <begin position="200"/>
        <end position="224"/>
    </location>
</feature>
<feature type="region of interest" description="PABPN1-binding" evidence="1">
    <location>
        <begin position="217"/>
        <end position="224"/>
    </location>
</feature>
<feature type="short sequence motif" description="Nuclear localization signal" evidence="1">
    <location>
        <begin position="34"/>
        <end position="38"/>
    </location>
</feature>
<feature type="short sequence motif" description="Nuclear export signal" evidence="1">
    <location>
        <begin position="131"/>
        <end position="140"/>
    </location>
</feature>
<accession>A4GCL4</accession>
<gene>
    <name evidence="1" type="primary">NS</name>
</gene>
<proteinExistence type="inferred from homology"/>
<sequence length="224" mass="25395">MDPNTVSSFQVDCFLWHVRKRVADQKLGDAPFLDRLRRDQKSLRGRGSTLGLNIETATRAGKQIVERILKEESDMPSAPASRYLTDMTIEEMSRDWFMLMPKQKVAGPLCIRMDQAIMDKSIILKANFSVIFDRLETLILLRAFTEEGAIVGEISPLPSLPGHTNEDVKNAIGVLIGGLEWNDNTVRVSKTLQRFAWRSSNENGRPPLTPKQKRKMARTIRSEV</sequence>
<keyword id="KW-0025">Alternative splicing</keyword>
<keyword id="KW-1262">Eukaryotic host gene expression shutoff by virus</keyword>
<keyword id="KW-1035">Host cytoplasm</keyword>
<keyword id="KW-1190">Host gene expression shutoff by virus</keyword>
<keyword id="KW-1192">Host mRNA suppression by virus</keyword>
<keyword id="KW-1048">Host nucleus</keyword>
<keyword id="KW-0945">Host-virus interaction</keyword>
<keyword id="KW-1090">Inhibition of host innate immune response by virus</keyword>
<keyword id="KW-1114">Inhibition of host interferon signaling pathway by virus</keyword>
<keyword id="KW-1102">Inhibition of host PKR by virus</keyword>
<keyword id="KW-1103">Inhibition of host pre-mRNA processing by virus</keyword>
<keyword id="KW-1088">Inhibition of host RIG-I by virus</keyword>
<keyword id="KW-1113">Inhibition of host RLR pathway by virus</keyword>
<keyword id="KW-0922">Interferon antiviral system evasion</keyword>
<keyword id="KW-0694">RNA-binding</keyword>
<keyword id="KW-0832">Ubl conjugation</keyword>
<keyword id="KW-0899">Viral immunoevasion</keyword>
<protein>
    <recommendedName>
        <fullName evidence="1">Non-structural protein 1</fullName>
        <shortName evidence="1">NS1</shortName>
    </recommendedName>
    <alternativeName>
        <fullName evidence="1">NS1A</fullName>
    </alternativeName>
</protein>
<evidence type="ECO:0000255" key="1">
    <source>
        <dbReference type="HAMAP-Rule" id="MF_04066"/>
    </source>
</evidence>
<evidence type="ECO:0000256" key="2">
    <source>
        <dbReference type="SAM" id="MobiDB-lite"/>
    </source>
</evidence>
<dbReference type="EMBL" id="CY020465">
    <property type="protein sequence ID" value="ABO38378.1"/>
    <property type="molecule type" value="Viral_cRNA"/>
</dbReference>
<dbReference type="SMR" id="A4GCL4"/>
<dbReference type="Proteomes" id="UP000008432">
    <property type="component" value="Genome"/>
</dbReference>
<dbReference type="GO" id="GO:0030430">
    <property type="term" value="C:host cell cytoplasm"/>
    <property type="evidence" value="ECO:0007669"/>
    <property type="project" value="UniProtKB-SubCell"/>
</dbReference>
<dbReference type="GO" id="GO:0042025">
    <property type="term" value="C:host cell nucleus"/>
    <property type="evidence" value="ECO:0007669"/>
    <property type="project" value="UniProtKB-SubCell"/>
</dbReference>
<dbReference type="GO" id="GO:0030291">
    <property type="term" value="F:protein serine/threonine kinase inhibitor activity"/>
    <property type="evidence" value="ECO:0007669"/>
    <property type="project" value="UniProtKB-KW"/>
</dbReference>
<dbReference type="GO" id="GO:0003723">
    <property type="term" value="F:RNA binding"/>
    <property type="evidence" value="ECO:0007669"/>
    <property type="project" value="UniProtKB-KW"/>
</dbReference>
<dbReference type="GO" id="GO:0039540">
    <property type="term" value="P:symbiont-mediated suppression of host cytoplasmic pattern recognition receptor signaling pathway via inhibition of RIG-I activity"/>
    <property type="evidence" value="ECO:0007669"/>
    <property type="project" value="UniProtKB-KW"/>
</dbReference>
<dbReference type="GO" id="GO:0039657">
    <property type="term" value="P:symbiont-mediated suppression of host gene expression"/>
    <property type="evidence" value="ECO:0007669"/>
    <property type="project" value="UniProtKB-KW"/>
</dbReference>
<dbReference type="GO" id="GO:0039524">
    <property type="term" value="P:symbiont-mediated suppression of host mRNA processing"/>
    <property type="evidence" value="ECO:0007669"/>
    <property type="project" value="UniProtKB-KW"/>
</dbReference>
<dbReference type="GO" id="GO:0039580">
    <property type="term" value="P:symbiont-mediated suppression of host PKR/eIFalpha signaling"/>
    <property type="evidence" value="ECO:0007669"/>
    <property type="project" value="UniProtKB-KW"/>
</dbReference>
<dbReference type="GO" id="GO:0039502">
    <property type="term" value="P:symbiont-mediated suppression of host type I interferon-mediated signaling pathway"/>
    <property type="evidence" value="ECO:0007669"/>
    <property type="project" value="UniProtKB-KW"/>
</dbReference>
<dbReference type="FunFam" id="1.10.287.10:FF:000001">
    <property type="entry name" value="Non-structural protein 1"/>
    <property type="match status" value="1"/>
</dbReference>
<dbReference type="FunFam" id="3.30.420.330:FF:000001">
    <property type="entry name" value="Non-structural protein 1"/>
    <property type="match status" value="1"/>
</dbReference>
<dbReference type="Gene3D" id="3.30.420.330">
    <property type="entry name" value="Influenza virus non-structural protein, effector domain"/>
    <property type="match status" value="1"/>
</dbReference>
<dbReference type="Gene3D" id="1.10.287.10">
    <property type="entry name" value="S15/NS1, RNA-binding"/>
    <property type="match status" value="1"/>
</dbReference>
<dbReference type="HAMAP" id="MF_04066">
    <property type="entry name" value="INFV_NS1"/>
    <property type="match status" value="1"/>
</dbReference>
<dbReference type="InterPro" id="IPR004208">
    <property type="entry name" value="NS1"/>
</dbReference>
<dbReference type="InterPro" id="IPR000256">
    <property type="entry name" value="NS1A"/>
</dbReference>
<dbReference type="InterPro" id="IPR038064">
    <property type="entry name" value="NS1A_effect_dom-like_sf"/>
</dbReference>
<dbReference type="InterPro" id="IPR009068">
    <property type="entry name" value="uS15_NS1_RNA-bd_sf"/>
</dbReference>
<dbReference type="Pfam" id="PF00600">
    <property type="entry name" value="Flu_NS1"/>
    <property type="match status" value="1"/>
</dbReference>
<dbReference type="SUPFAM" id="SSF143021">
    <property type="entry name" value="Ns1 effector domain-like"/>
    <property type="match status" value="1"/>
</dbReference>
<dbReference type="SUPFAM" id="SSF47060">
    <property type="entry name" value="S15/NS1 RNA-binding domain"/>
    <property type="match status" value="1"/>
</dbReference>